<organismHost>
    <name type="scientific">Gallus gallus</name>
    <name type="common">Chicken</name>
    <dbReference type="NCBI Taxonomy" id="9031"/>
</organismHost>
<gene>
    <name type="primary">HN</name>
</gene>
<feature type="chain" id="PRO_0000142612" description="Hemagglutinin-neuraminidase">
    <location>
        <begin position="1"/>
        <end position="571"/>
    </location>
</feature>
<feature type="topological domain" description="Intravirion" evidence="4">
    <location>
        <begin position="1"/>
        <end position="26"/>
    </location>
</feature>
<feature type="transmembrane region" description="Helical" evidence="4">
    <location>
        <begin position="27"/>
        <end position="47"/>
    </location>
</feature>
<feature type="topological domain" description="Virion surface" evidence="4">
    <location>
        <begin position="48"/>
        <end position="571"/>
    </location>
</feature>
<feature type="region of interest" description="Important for interaction with fusion/F protein" evidence="2">
    <location>
        <begin position="124"/>
        <end position="152"/>
    </location>
</feature>
<feature type="region of interest" description="Involved in neuraminidase activity" evidence="2">
    <location>
        <begin position="234"/>
        <end position="239"/>
    </location>
</feature>
<feature type="glycosylation site" description="N-linked (GlcNAc...) asparagine; by host" evidence="4">
    <location>
        <position position="119"/>
    </location>
</feature>
<feature type="glycosylation site" description="N-linked (GlcNAc...) asparagine; by host" evidence="2">
    <location>
        <position position="341"/>
    </location>
</feature>
<feature type="glycosylation site" description="N-linked (GlcNAc...) asparagine; by host" evidence="2">
    <location>
        <position position="433"/>
    </location>
</feature>
<feature type="glycosylation site" description="N-linked (GlcNAc...) asparagine; by host" evidence="2">
    <location>
        <position position="481"/>
    </location>
</feature>
<feature type="glycosylation site" description="N-linked (GlcNAc...) asparagine; by host" evidence="4">
    <location>
        <position position="508"/>
    </location>
</feature>
<feature type="glycosylation site" description="N-linked (GlcNAc...) asparagine; by host" evidence="4">
    <location>
        <position position="538"/>
    </location>
</feature>
<feature type="disulfide bond" evidence="3">
    <location>
        <begin position="172"/>
        <end position="196"/>
    </location>
</feature>
<feature type="disulfide bond" evidence="3">
    <location>
        <begin position="186"/>
        <end position="247"/>
    </location>
</feature>
<feature type="disulfide bond" evidence="3">
    <location>
        <begin position="238"/>
        <end position="251"/>
    </location>
</feature>
<feature type="disulfide bond" evidence="3">
    <location>
        <begin position="344"/>
        <end position="461"/>
    </location>
</feature>
<feature type="disulfide bond" evidence="3">
    <location>
        <begin position="455"/>
        <end position="465"/>
    </location>
</feature>
<feature type="disulfide bond" evidence="3">
    <location>
        <begin position="531"/>
        <end position="542"/>
    </location>
</feature>
<feature type="sequence variant">
    <original>RA</original>
    <variation>LP</variation>
    <location>
        <begin position="3"/>
        <end position="4"/>
    </location>
</feature>
<feature type="sequence variant">
    <original>T</original>
    <variation>S</variation>
    <location>
        <position position="52"/>
    </location>
</feature>
<feature type="sequence variant">
    <original>S</original>
    <variation>G</variation>
    <location>
        <position position="75"/>
    </location>
</feature>
<feature type="sequence variant">
    <original>T</original>
    <variation>A</variation>
    <location>
        <position position="216"/>
    </location>
</feature>
<feature type="sequence variant">
    <original>PE</original>
    <variation>AD</variation>
    <location>
        <begin position="400"/>
        <end position="401"/>
    </location>
</feature>
<comment type="function">
    <text evidence="2">Mediates the viral entry into the host cell together with fusion/F protein. Attaches the virus to sialic acid-containing cell receptors and thereby initiates infection. Binding of HN protein to the receptor induces a conformational change that allows the F protein to trigger virion/cell membranes fusion.</text>
</comment>
<comment type="function">
    <text evidence="2">Neuraminidase activity ensures the efficient spread of the virus by dissociating the mature virions from the neuraminic acid containing glycoproteins.</text>
</comment>
<comment type="catalytic activity">
    <reaction evidence="2">
        <text>Hydrolysis of alpha-(2-&gt;3)-, alpha-(2-&gt;6)-, alpha-(2-&gt;8)- glycosidic linkages of terminal sialic acid residues in oligosaccharides, glycoproteins, glycolipids, colominic acid and synthetic substrates.</text>
        <dbReference type="EC" id="3.2.1.18"/>
    </reaction>
</comment>
<comment type="subunit">
    <text evidence="1 2 3">Homotetramer; composed of disulfide-linked homodimers (By similarity). Interacts with F protein trimer (By similarity). Interacts with host CG-1B; this interaction inhibits viral adsorption and replication rather than internalization (By similarity).</text>
</comment>
<comment type="subcellular location">
    <subcellularLocation>
        <location evidence="2">Virion membrane</location>
        <topology evidence="2">Single-pass type II membrane protein</topology>
    </subcellularLocation>
    <subcellularLocation>
        <location evidence="2">Host cell membrane</location>
        <topology evidence="2">Single-pass type II membrane protein</topology>
    </subcellularLocation>
</comment>
<comment type="domain">
    <text evidence="3">The C-terminus (head domain) is involved in binding the cellular receptor.</text>
</comment>
<comment type="similarity">
    <text evidence="5">Belongs to the paramyxoviruses hemagglutinin-neuraminidase family.</text>
</comment>
<name>HN_NDVI</name>
<accession>P12556</accession>
<protein>
    <recommendedName>
        <fullName>Hemagglutinin-neuraminidase</fullName>
        <ecNumber evidence="3">3.2.1.18</ecNumber>
    </recommendedName>
</protein>
<evidence type="ECO:0000250" key="1">
    <source>
        <dbReference type="UniProtKB" id="P04853"/>
    </source>
</evidence>
<evidence type="ECO:0000250" key="2">
    <source>
        <dbReference type="UniProtKB" id="Q91UL0"/>
    </source>
</evidence>
<evidence type="ECO:0000250" key="3">
    <source>
        <dbReference type="UniProtKB" id="Q9WAF5"/>
    </source>
</evidence>
<evidence type="ECO:0000255" key="4"/>
<evidence type="ECO:0000305" key="5"/>
<reference key="1">
    <citation type="journal article" date="1987" name="Arch. Virol.">
        <title>The hemagglutinin-neuraminidase (HN) gene of Newcastle disease virus strain Italien (NDV Italien): comparison with HNs of other strains and expression by a vaccinia recombinant.</title>
        <authorList>
            <person name="Wemers C.D."/>
            <person name="de Henau S."/>
            <person name="Neyt C."/>
            <person name="Espion D."/>
            <person name="Letellier C."/>
            <person name="Meulemans G."/>
            <person name="Burny A."/>
        </authorList>
    </citation>
    <scope>NUCLEOTIDE SEQUENCE [GENOMIC RNA]</scope>
</reference>
<reference key="2">
    <citation type="journal article" date="1989" name="Virology">
        <title>Newcastle disease virus evolution. I. Multiple lineages defined by sequence variability of the hemagglutinin-neuraminidase gene.</title>
        <authorList>
            <person name="Sakaguchi T."/>
            <person name="Toyoda T."/>
            <person name="Gotoh B."/>
            <person name="Inocencio N.M."/>
            <person name="Kuma K."/>
            <person name="Miyata T."/>
            <person name="Nagai Y."/>
        </authorList>
    </citation>
    <scope>NUCLEOTIDE SEQUENCE [GENOMIC RNA]</scope>
</reference>
<keyword id="KW-1015">Disulfide bond</keyword>
<keyword id="KW-0325">Glycoprotein</keyword>
<keyword id="KW-0348">Hemagglutinin</keyword>
<keyword id="KW-1032">Host cell membrane</keyword>
<keyword id="KW-1043">Host membrane</keyword>
<keyword id="KW-0945">Host-virus interaction</keyword>
<keyword id="KW-0378">Hydrolase</keyword>
<keyword id="KW-0472">Membrane</keyword>
<keyword id="KW-0735">Signal-anchor</keyword>
<keyword id="KW-0812">Transmembrane</keyword>
<keyword id="KW-1133">Transmembrane helix</keyword>
<keyword id="KW-1161">Viral attachment to host cell</keyword>
<keyword id="KW-0261">Viral envelope protein</keyword>
<keyword id="KW-0946">Virion</keyword>
<keyword id="KW-1160">Virus entry into host cell</keyword>
<dbReference type="EC" id="3.2.1.18" evidence="3"/>
<dbReference type="EMBL" id="M18640">
    <property type="protein sequence ID" value="AAA46671.1"/>
    <property type="molecule type" value="Genomic_RNA"/>
</dbReference>
<dbReference type="EMBL" id="M24715">
    <property type="protein sequence ID" value="AAA46665.1"/>
    <property type="molecule type" value="Genomic_RNA"/>
</dbReference>
<dbReference type="PIR" id="S07126">
    <property type="entry name" value="B36829"/>
</dbReference>
<dbReference type="SMR" id="P12556"/>
<dbReference type="CAZy" id="GH83">
    <property type="family name" value="Glycoside Hydrolase Family 83"/>
</dbReference>
<dbReference type="GlyCosmos" id="P12556">
    <property type="glycosylation" value="6 sites, No reported glycans"/>
</dbReference>
<dbReference type="SABIO-RK" id="P12556"/>
<dbReference type="GO" id="GO:0020002">
    <property type="term" value="C:host cell plasma membrane"/>
    <property type="evidence" value="ECO:0007669"/>
    <property type="project" value="UniProtKB-SubCell"/>
</dbReference>
<dbReference type="GO" id="GO:0016020">
    <property type="term" value="C:membrane"/>
    <property type="evidence" value="ECO:0007669"/>
    <property type="project" value="UniProtKB-KW"/>
</dbReference>
<dbReference type="GO" id="GO:0019031">
    <property type="term" value="C:viral envelope"/>
    <property type="evidence" value="ECO:0007669"/>
    <property type="project" value="UniProtKB-KW"/>
</dbReference>
<dbReference type="GO" id="GO:0055036">
    <property type="term" value="C:virion membrane"/>
    <property type="evidence" value="ECO:0007669"/>
    <property type="project" value="UniProtKB-SubCell"/>
</dbReference>
<dbReference type="GO" id="GO:0004308">
    <property type="term" value="F:exo-alpha-sialidase activity"/>
    <property type="evidence" value="ECO:0007669"/>
    <property type="project" value="UniProtKB-EC"/>
</dbReference>
<dbReference type="GO" id="GO:0046789">
    <property type="term" value="F:host cell surface receptor binding"/>
    <property type="evidence" value="ECO:0007669"/>
    <property type="project" value="InterPro"/>
</dbReference>
<dbReference type="GO" id="GO:0046718">
    <property type="term" value="P:symbiont entry into host cell"/>
    <property type="evidence" value="ECO:0007669"/>
    <property type="project" value="UniProtKB-KW"/>
</dbReference>
<dbReference type="GO" id="GO:0019062">
    <property type="term" value="P:virion attachment to host cell"/>
    <property type="evidence" value="ECO:0007669"/>
    <property type="project" value="UniProtKB-KW"/>
</dbReference>
<dbReference type="CDD" id="cd15469">
    <property type="entry name" value="HN"/>
    <property type="match status" value="1"/>
</dbReference>
<dbReference type="FunFam" id="2.120.10.10:FF:000004">
    <property type="entry name" value="Hemagglutinin-neuraminidase"/>
    <property type="match status" value="1"/>
</dbReference>
<dbReference type="Gene3D" id="2.120.10.10">
    <property type="match status" value="1"/>
</dbReference>
<dbReference type="InterPro" id="IPR016285">
    <property type="entry name" value="Hemagglutn-neuramid"/>
</dbReference>
<dbReference type="InterPro" id="IPR000665">
    <property type="entry name" value="Hemagglutn/HN"/>
</dbReference>
<dbReference type="InterPro" id="IPR036278">
    <property type="entry name" value="Sialidase_sf"/>
</dbReference>
<dbReference type="Pfam" id="PF00423">
    <property type="entry name" value="HN"/>
    <property type="match status" value="1"/>
</dbReference>
<dbReference type="PIRSF" id="PIRSF001072">
    <property type="entry name" value="Hemagglut-neuramid_paramyxoV"/>
    <property type="match status" value="1"/>
</dbReference>
<dbReference type="SUPFAM" id="SSF50939">
    <property type="entry name" value="Sialidases"/>
    <property type="match status" value="1"/>
</dbReference>
<organism>
    <name type="scientific">Newcastle disease virus (strain Italien/45)</name>
    <name type="common">NDV</name>
    <dbReference type="NCBI Taxonomy" id="11182"/>
    <lineage>
        <taxon>Viruses</taxon>
        <taxon>Riboviria</taxon>
        <taxon>Orthornavirae</taxon>
        <taxon>Negarnaviricota</taxon>
        <taxon>Haploviricotina</taxon>
        <taxon>Monjiviricetes</taxon>
        <taxon>Mononegavirales</taxon>
        <taxon>Paramyxoviridae</taxon>
        <taxon>Avulavirinae</taxon>
        <taxon>Orthoavulavirus</taxon>
        <taxon>Orthoavulavirus javaense</taxon>
        <taxon>Avian paramyxovirus 1</taxon>
    </lineage>
</organism>
<sequence>MDRAVGRVALENEEREAKNTWRFVFRIAIFLLIVITLAISAAALVYSMEASTPGDLVGIPTVISRAEEKITSALSSNQDVVDRIYKQVALESPLALLNTESVIMNAITSLSYQINGAANNSGCGAPVHDPDYIGGIGKELIVDDASDVTSFYPSAFQEHLNFIPAPTTGSGCTRIPSFDISATHYCYTHNVILSGCRDHSHSHQYLALGVLRTSATGRVFFSTLRSINLDDNQNRKSCSVSATPLGCDMLCSKITETEEEDYSSVTPTSMVHGRLGFDGQYHEKDLDVITLFKDWVANYPGVGGGSFIDNRVWFPVYGGLKPNSPSDTAQEGRYVIYKRYNDTCPDEQDYQIRMAKSSYKPGRFGGKRVQQAILSIKVSTSLGEDPVLTVPPNTVTLMGPEGRVLTVGTSHFLYQRGSSYFSPALLYPMTVNNKTATLHSPYTFNAFTRPGSVPCQASARCPNSCVTGVYTDPYPLVFHRNHTLRGVFGTMLDDKQARLNPVSAVFDNISRSRITRVSSSSTKAAYTTSTCFKVVKTNKTYCLSIAEISNTLFGEFRIVPLLVEILKEDGV</sequence>
<proteinExistence type="inferred from homology"/>